<name>RL31B_XYLFT</name>
<organism>
    <name type="scientific">Xylella fastidiosa (strain Temecula1 / ATCC 700964)</name>
    <dbReference type="NCBI Taxonomy" id="183190"/>
    <lineage>
        <taxon>Bacteria</taxon>
        <taxon>Pseudomonadati</taxon>
        <taxon>Pseudomonadota</taxon>
        <taxon>Gammaproteobacteria</taxon>
        <taxon>Lysobacterales</taxon>
        <taxon>Lysobacteraceae</taxon>
        <taxon>Xylella</taxon>
    </lineage>
</organism>
<feature type="chain" id="PRO_0000173288" description="Large ribosomal subunit protein bL31B">
    <location>
        <begin position="1"/>
        <end position="80"/>
    </location>
</feature>
<comment type="subunit">
    <text evidence="1">Part of the 50S ribosomal subunit.</text>
</comment>
<comment type="similarity">
    <text evidence="1">Belongs to the bacterial ribosomal protein bL31 family. Type B subfamily.</text>
</comment>
<reference key="1">
    <citation type="journal article" date="2003" name="J. Bacteriol.">
        <title>Comparative analyses of the complete genome sequences of Pierce's disease and citrus variegated chlorosis strains of Xylella fastidiosa.</title>
        <authorList>
            <person name="Van Sluys M.A."/>
            <person name="de Oliveira M.C."/>
            <person name="Monteiro-Vitorello C.B."/>
            <person name="Miyaki C.Y."/>
            <person name="Furlan L.R."/>
            <person name="Camargo L.E.A."/>
            <person name="da Silva A.C.R."/>
            <person name="Moon D.H."/>
            <person name="Takita M.A."/>
            <person name="Lemos E.G.M."/>
            <person name="Machado M.A."/>
            <person name="Ferro M.I.T."/>
            <person name="da Silva F.R."/>
            <person name="Goldman M.H.S."/>
            <person name="Goldman G.H."/>
            <person name="Lemos M.V.F."/>
            <person name="El-Dorry H."/>
            <person name="Tsai S.M."/>
            <person name="Carrer H."/>
            <person name="Carraro D.M."/>
            <person name="de Oliveira R.C."/>
            <person name="Nunes L.R."/>
            <person name="Siqueira W.J."/>
            <person name="Coutinho L.L."/>
            <person name="Kimura E.T."/>
            <person name="Ferro E.S."/>
            <person name="Harakava R."/>
            <person name="Kuramae E.E."/>
            <person name="Marino C.L."/>
            <person name="Giglioti E."/>
            <person name="Abreu I.L."/>
            <person name="Alves L.M.C."/>
            <person name="do Amaral A.M."/>
            <person name="Baia G.S."/>
            <person name="Blanco S.R."/>
            <person name="Brito M.S."/>
            <person name="Cannavan F.S."/>
            <person name="Celestino A.V."/>
            <person name="da Cunha A.F."/>
            <person name="Fenille R.C."/>
            <person name="Ferro J.A."/>
            <person name="Formighieri E.F."/>
            <person name="Kishi L.T."/>
            <person name="Leoni S.G."/>
            <person name="Oliveira A.R."/>
            <person name="Rosa V.E. Jr."/>
            <person name="Sassaki F.T."/>
            <person name="Sena J.A.D."/>
            <person name="de Souza A.A."/>
            <person name="Truffi D."/>
            <person name="Tsukumo F."/>
            <person name="Yanai G.M."/>
            <person name="Zaros L.G."/>
            <person name="Civerolo E.L."/>
            <person name="Simpson A.J.G."/>
            <person name="Almeida N.F. Jr."/>
            <person name="Setubal J.C."/>
            <person name="Kitajima J.P."/>
        </authorList>
    </citation>
    <scope>NUCLEOTIDE SEQUENCE [LARGE SCALE GENOMIC DNA]</scope>
    <source>
        <strain>Temecula1 / ATCC 700964</strain>
    </source>
</reference>
<keyword id="KW-1185">Reference proteome</keyword>
<keyword id="KW-0687">Ribonucleoprotein</keyword>
<keyword id="KW-0689">Ribosomal protein</keyword>
<proteinExistence type="inferred from homology"/>
<accession>Q87DD6</accession>
<protein>
    <recommendedName>
        <fullName evidence="1">Large ribosomal subunit protein bL31B</fullName>
    </recommendedName>
    <alternativeName>
        <fullName evidence="2">50S ribosomal protein L31 type B</fullName>
    </alternativeName>
</protein>
<evidence type="ECO:0000255" key="1">
    <source>
        <dbReference type="HAMAP-Rule" id="MF_00502"/>
    </source>
</evidence>
<evidence type="ECO:0000305" key="2"/>
<sequence>MKPEIHPIYREVVFHDVTSNFKFLTRSTMGTKETTLWEDGLEYPLVKVEISSASHPFYTGKHKLVDTSGRIDKFKKRYAR</sequence>
<gene>
    <name evidence="1" type="primary">rpmE2</name>
    <name type="ordered locus">PD_0749</name>
</gene>
<dbReference type="EMBL" id="AE009442">
    <property type="protein sequence ID" value="AAO28618.1"/>
    <property type="molecule type" value="Genomic_DNA"/>
</dbReference>
<dbReference type="RefSeq" id="WP_004087863.1">
    <property type="nucleotide sequence ID" value="NC_004556.1"/>
</dbReference>
<dbReference type="SMR" id="Q87DD6"/>
<dbReference type="KEGG" id="xft:PD_0749"/>
<dbReference type="HOGENOM" id="CLU_114306_2_2_6"/>
<dbReference type="Proteomes" id="UP000002516">
    <property type="component" value="Chromosome"/>
</dbReference>
<dbReference type="GO" id="GO:1990904">
    <property type="term" value="C:ribonucleoprotein complex"/>
    <property type="evidence" value="ECO:0007669"/>
    <property type="project" value="UniProtKB-KW"/>
</dbReference>
<dbReference type="GO" id="GO:0005840">
    <property type="term" value="C:ribosome"/>
    <property type="evidence" value="ECO:0007669"/>
    <property type="project" value="UniProtKB-KW"/>
</dbReference>
<dbReference type="GO" id="GO:0003735">
    <property type="term" value="F:structural constituent of ribosome"/>
    <property type="evidence" value="ECO:0007669"/>
    <property type="project" value="InterPro"/>
</dbReference>
<dbReference type="GO" id="GO:0006412">
    <property type="term" value="P:translation"/>
    <property type="evidence" value="ECO:0007669"/>
    <property type="project" value="UniProtKB-UniRule"/>
</dbReference>
<dbReference type="Gene3D" id="4.10.830.30">
    <property type="entry name" value="Ribosomal protein L31"/>
    <property type="match status" value="1"/>
</dbReference>
<dbReference type="HAMAP" id="MF_00502">
    <property type="entry name" value="Ribosomal_bL31_2"/>
    <property type="match status" value="1"/>
</dbReference>
<dbReference type="InterPro" id="IPR034704">
    <property type="entry name" value="Ribosomal_bL28/bL31-like_sf"/>
</dbReference>
<dbReference type="InterPro" id="IPR002150">
    <property type="entry name" value="Ribosomal_bL31"/>
</dbReference>
<dbReference type="InterPro" id="IPR027493">
    <property type="entry name" value="Ribosomal_bL31_B"/>
</dbReference>
<dbReference type="InterPro" id="IPR042105">
    <property type="entry name" value="Ribosomal_bL31_sf"/>
</dbReference>
<dbReference type="NCBIfam" id="TIGR00105">
    <property type="entry name" value="L31"/>
    <property type="match status" value="1"/>
</dbReference>
<dbReference type="NCBIfam" id="NF002462">
    <property type="entry name" value="PRK01678.1"/>
    <property type="match status" value="1"/>
</dbReference>
<dbReference type="PANTHER" id="PTHR33280">
    <property type="entry name" value="50S RIBOSOMAL PROTEIN L31, CHLOROPLASTIC"/>
    <property type="match status" value="1"/>
</dbReference>
<dbReference type="PANTHER" id="PTHR33280:SF6">
    <property type="entry name" value="LARGE RIBOSOMAL SUBUNIT PROTEIN BL31A"/>
    <property type="match status" value="1"/>
</dbReference>
<dbReference type="Pfam" id="PF01197">
    <property type="entry name" value="Ribosomal_L31"/>
    <property type="match status" value="1"/>
</dbReference>
<dbReference type="PRINTS" id="PR01249">
    <property type="entry name" value="RIBOSOMALL31"/>
</dbReference>
<dbReference type="SUPFAM" id="SSF143800">
    <property type="entry name" value="L28p-like"/>
    <property type="match status" value="1"/>
</dbReference>
<dbReference type="PROSITE" id="PS01143">
    <property type="entry name" value="RIBOSOMAL_L31"/>
    <property type="match status" value="1"/>
</dbReference>